<gene>
    <name type="primary">trkA</name>
    <name type="ordered locus">c4050</name>
</gene>
<dbReference type="EMBL" id="AE014075">
    <property type="protein sequence ID" value="AAN82488.1"/>
    <property type="molecule type" value="Genomic_DNA"/>
</dbReference>
<dbReference type="RefSeq" id="WP_000691382.1">
    <property type="nucleotide sequence ID" value="NZ_CP051263.1"/>
</dbReference>
<dbReference type="SMR" id="P0AGI9"/>
<dbReference type="STRING" id="199310.c4050"/>
<dbReference type="GeneID" id="93778698"/>
<dbReference type="KEGG" id="ecc:c4050"/>
<dbReference type="eggNOG" id="COG0569">
    <property type="taxonomic scope" value="Bacteria"/>
</dbReference>
<dbReference type="HOGENOM" id="CLU_046525_0_2_6"/>
<dbReference type="BioCyc" id="ECOL199310:C4050-MONOMER"/>
<dbReference type="Proteomes" id="UP000001410">
    <property type="component" value="Chromosome"/>
</dbReference>
<dbReference type="GO" id="GO:0005886">
    <property type="term" value="C:plasma membrane"/>
    <property type="evidence" value="ECO:0007669"/>
    <property type="project" value="UniProtKB-SubCell"/>
</dbReference>
<dbReference type="GO" id="GO:0015079">
    <property type="term" value="F:potassium ion transmembrane transporter activity"/>
    <property type="evidence" value="ECO:0007669"/>
    <property type="project" value="InterPro"/>
</dbReference>
<dbReference type="FunFam" id="3.30.70.1450:FF:000001">
    <property type="entry name" value="Trk system potassium transporter TrkA"/>
    <property type="match status" value="1"/>
</dbReference>
<dbReference type="FunFam" id="3.30.70.1450:FF:000002">
    <property type="entry name" value="Trk system potassium transporter TrkA"/>
    <property type="match status" value="1"/>
</dbReference>
<dbReference type="FunFam" id="3.40.50.720:FF:000027">
    <property type="entry name" value="Trk system potassium transporter TrkA"/>
    <property type="match status" value="1"/>
</dbReference>
<dbReference type="FunFam" id="3.40.50.720:FF:000042">
    <property type="entry name" value="Trk system potassium transporter TrkA"/>
    <property type="match status" value="1"/>
</dbReference>
<dbReference type="Gene3D" id="3.40.50.720">
    <property type="entry name" value="NAD(P)-binding Rossmann-like Domain"/>
    <property type="match status" value="2"/>
</dbReference>
<dbReference type="Gene3D" id="3.30.70.1450">
    <property type="entry name" value="Regulator of K+ conductance, C-terminal domain"/>
    <property type="match status" value="2"/>
</dbReference>
<dbReference type="InterPro" id="IPR006036">
    <property type="entry name" value="K_uptake_TrkA"/>
</dbReference>
<dbReference type="InterPro" id="IPR036291">
    <property type="entry name" value="NAD(P)-bd_dom_sf"/>
</dbReference>
<dbReference type="InterPro" id="IPR006037">
    <property type="entry name" value="RCK_C"/>
</dbReference>
<dbReference type="InterPro" id="IPR036721">
    <property type="entry name" value="RCK_C_sf"/>
</dbReference>
<dbReference type="InterPro" id="IPR003148">
    <property type="entry name" value="RCK_N"/>
</dbReference>
<dbReference type="InterPro" id="IPR050721">
    <property type="entry name" value="Trk_Ktr_HKT_K-transport"/>
</dbReference>
<dbReference type="NCBIfam" id="NF007030">
    <property type="entry name" value="PRK09496.1-1"/>
    <property type="match status" value="1"/>
</dbReference>
<dbReference type="NCBIfam" id="NF007031">
    <property type="entry name" value="PRK09496.1-2"/>
    <property type="match status" value="1"/>
</dbReference>
<dbReference type="NCBIfam" id="NF007032">
    <property type="entry name" value="PRK09496.1-4"/>
    <property type="match status" value="1"/>
</dbReference>
<dbReference type="NCBIfam" id="NF007039">
    <property type="entry name" value="PRK09496.3-2"/>
    <property type="match status" value="1"/>
</dbReference>
<dbReference type="PANTHER" id="PTHR43833">
    <property type="entry name" value="POTASSIUM CHANNEL PROTEIN 2-RELATED-RELATED"/>
    <property type="match status" value="1"/>
</dbReference>
<dbReference type="PANTHER" id="PTHR43833:SF5">
    <property type="entry name" value="TRK SYSTEM POTASSIUM UPTAKE PROTEIN TRKA"/>
    <property type="match status" value="1"/>
</dbReference>
<dbReference type="Pfam" id="PF02080">
    <property type="entry name" value="TrkA_C"/>
    <property type="match status" value="2"/>
</dbReference>
<dbReference type="Pfam" id="PF02254">
    <property type="entry name" value="TrkA_N"/>
    <property type="match status" value="2"/>
</dbReference>
<dbReference type="PRINTS" id="PR00335">
    <property type="entry name" value="KUPTAKETRKA"/>
</dbReference>
<dbReference type="SUPFAM" id="SSF51735">
    <property type="entry name" value="NAD(P)-binding Rossmann-fold domains"/>
    <property type="match status" value="2"/>
</dbReference>
<dbReference type="SUPFAM" id="SSF116726">
    <property type="entry name" value="TrkA C-terminal domain-like"/>
    <property type="match status" value="2"/>
</dbReference>
<dbReference type="PROSITE" id="PS51202">
    <property type="entry name" value="RCK_C"/>
    <property type="match status" value="2"/>
</dbReference>
<dbReference type="PROSITE" id="PS51201">
    <property type="entry name" value="RCK_N"/>
    <property type="match status" value="2"/>
</dbReference>
<protein>
    <recommendedName>
        <fullName>Trk system potassium uptake protein TrkA</fullName>
        <shortName>K(+)-uptake protein TrkA</shortName>
    </recommendedName>
</protein>
<proteinExistence type="inferred from homology"/>
<evidence type="ECO:0000250" key="1"/>
<evidence type="ECO:0000255" key="2"/>
<evidence type="ECO:0000255" key="3">
    <source>
        <dbReference type="PROSITE-ProRule" id="PRU00543"/>
    </source>
</evidence>
<evidence type="ECO:0000255" key="4">
    <source>
        <dbReference type="PROSITE-ProRule" id="PRU00544"/>
    </source>
</evidence>
<organism>
    <name type="scientific">Escherichia coli O6:H1 (strain CFT073 / ATCC 700928 / UPEC)</name>
    <dbReference type="NCBI Taxonomy" id="199310"/>
    <lineage>
        <taxon>Bacteria</taxon>
        <taxon>Pseudomonadati</taxon>
        <taxon>Pseudomonadota</taxon>
        <taxon>Gammaproteobacteria</taxon>
        <taxon>Enterobacterales</taxon>
        <taxon>Enterobacteriaceae</taxon>
        <taxon>Escherichia</taxon>
    </lineage>
</organism>
<accession>P0AGI9</accession>
<accession>P23868</accession>
<accession>P77041</accession>
<name>TRKA_ECOL6</name>
<reference key="1">
    <citation type="journal article" date="2002" name="Proc. Natl. Acad. Sci. U.S.A.">
        <title>Extensive mosaic structure revealed by the complete genome sequence of uropathogenic Escherichia coli.</title>
        <authorList>
            <person name="Welch R.A."/>
            <person name="Burland V."/>
            <person name="Plunkett G. III"/>
            <person name="Redford P."/>
            <person name="Roesch P."/>
            <person name="Rasko D."/>
            <person name="Buckles E.L."/>
            <person name="Liou S.-R."/>
            <person name="Boutin A."/>
            <person name="Hackett J."/>
            <person name="Stroud D."/>
            <person name="Mayhew G.F."/>
            <person name="Rose D.J."/>
            <person name="Zhou S."/>
            <person name="Schwartz D.C."/>
            <person name="Perna N.T."/>
            <person name="Mobley H.L.T."/>
            <person name="Donnenberg M.S."/>
            <person name="Blattner F.R."/>
        </authorList>
    </citation>
    <scope>NUCLEOTIDE SEQUENCE [LARGE SCALE GENOMIC DNA]</scope>
    <source>
        <strain>CFT073 / ATCC 700928 / UPEC</strain>
    </source>
</reference>
<feature type="chain" id="PRO_0000148714" description="Trk system potassium uptake protein TrkA">
    <location>
        <begin position="1"/>
        <end position="458"/>
    </location>
</feature>
<feature type="domain" description="RCK N-terminal 1" evidence="3">
    <location>
        <begin position="1"/>
        <end position="123"/>
    </location>
</feature>
<feature type="domain" description="RCK C-terminal 1" evidence="4">
    <location>
        <begin position="143"/>
        <end position="227"/>
    </location>
</feature>
<feature type="domain" description="RCK N-terminal 2" evidence="3">
    <location>
        <begin position="232"/>
        <end position="348"/>
    </location>
</feature>
<feature type="domain" description="RCK C-terminal 2" evidence="4">
    <location>
        <begin position="368"/>
        <end position="453"/>
    </location>
</feature>
<feature type="binding site" description="in other chain" evidence="1">
    <location>
        <begin position="7"/>
        <end position="11"/>
    </location>
    <ligand>
        <name>NAD(+)</name>
        <dbReference type="ChEBI" id="CHEBI:57540"/>
        <label>1</label>
        <note>ligand shared between dimeric partners</note>
    </ligand>
</feature>
<feature type="binding site" description="in other chain" evidence="1">
    <location>
        <position position="30"/>
    </location>
    <ligand>
        <name>NAD(+)</name>
        <dbReference type="ChEBI" id="CHEBI:57540"/>
        <label>1</label>
        <note>ligand shared between dimeric partners</note>
    </ligand>
</feature>
<feature type="binding site" description="in other chain" evidence="1">
    <location>
        <begin position="73"/>
        <end position="74"/>
    </location>
    <ligand>
        <name>NAD(+)</name>
        <dbReference type="ChEBI" id="CHEBI:57540"/>
        <label>1</label>
        <note>ligand shared between dimeric partners</note>
    </ligand>
</feature>
<feature type="binding site" evidence="1">
    <location>
        <position position="98"/>
    </location>
    <ligand>
        <name>NAD(+)</name>
        <dbReference type="ChEBI" id="CHEBI:57540"/>
        <label>1</label>
        <note>ligand shared between dimeric partners</note>
    </ligand>
</feature>
<feature type="binding site" evidence="2">
    <location>
        <begin position="234"/>
        <end position="262"/>
    </location>
    <ligand>
        <name>NAD(+)</name>
        <dbReference type="ChEBI" id="CHEBI:57540"/>
        <label>2</label>
    </ligand>
</feature>
<keyword id="KW-0997">Cell inner membrane</keyword>
<keyword id="KW-1003">Cell membrane</keyword>
<keyword id="KW-0406">Ion transport</keyword>
<keyword id="KW-0472">Membrane</keyword>
<keyword id="KW-0520">NAD</keyword>
<keyword id="KW-0630">Potassium</keyword>
<keyword id="KW-0633">Potassium transport</keyword>
<keyword id="KW-1185">Reference proteome</keyword>
<keyword id="KW-0677">Repeat</keyword>
<keyword id="KW-0813">Transport</keyword>
<comment type="function">
    <text evidence="1">Part of the constitutive potassium transport systems TrkG and TrkH. May regulate the transport activity of TrkG and TrkH systems. Binds to NAD(+) and NADH (By similarity).</text>
</comment>
<comment type="subcellular location">
    <subcellularLocation>
        <location evidence="1">Cell inner membrane</location>
        <topology evidence="1">Peripheral membrane protein</topology>
        <orientation evidence="1">Cytoplasmic side</orientation>
    </subcellularLocation>
    <text evidence="1">Peripherally bound to the inner side of the inner membrane via the TrkG and TrkH proteins.</text>
</comment>
<comment type="domain">
    <text evidence="1">The RCK N-terminal domain binds NAD and possibly other effectors. This is expected to cause a conformation change that regulates potassium transport (By similarity).</text>
</comment>
<sequence length="458" mass="50368">MKIIILGAGQVGGTLAENLVGENNDITVVDTNGERLRTLQDKFDLRVVQGHGSHPRVLREAGADDADMLVAVTSSDETNMVACQVAYSLFNTPNRIARIRSPDYVRDADKLFHSDAVPIDHLIAPEQLVIDNIYRLIEYPGALQVVNFAEGKVSLAVVKAYYGGPLIGNALSTMREHMPHIDTRVAAIFRHDRPIRPQGSTIVEAGDEVFFIAASQHIRAVMSELQRLEKPYKRIMLVGGGNIGAGLARRLEKDYSVKLIERNQQRAAELAEKLQNTIVFFGDASDQELLAEEHIDQVDLFIAVTNDDEANIMSAMLAKRMGAKKVMVLIQRRAYVDLVQGSVIDIAISPQQATISALLSHVRKADIVGVSSLRRGVAEAIEAVAHGDESTSRVVGRVIDEIKLPPGTIIGAVVRGNDVMIANDNLRIEQGDHVIMFLTDKKFITDVERLFQPSPFFL</sequence>